<reference key="1">
    <citation type="submission" date="2007-09" db="EMBL/GenBank/DDBJ databases">
        <title>Complete genome sequencing of Rickettsia bellii.</title>
        <authorList>
            <person name="Madan A."/>
            <person name="Lee H."/>
            <person name="Madan A."/>
            <person name="Yoon J.-G."/>
            <person name="Ryu G.-Y."/>
            <person name="Dasch G."/>
            <person name="Ereemeva M."/>
        </authorList>
    </citation>
    <scope>NUCLEOTIDE SEQUENCE [LARGE SCALE GENOMIC DNA]</scope>
    <source>
        <strain>OSU 85-389</strain>
    </source>
</reference>
<gene>
    <name evidence="1" type="primary">lipA</name>
    <name type="ordered locus">A1I_00315</name>
</gene>
<comment type="function">
    <text evidence="1">Catalyzes the radical-mediated insertion of two sulfur atoms into the C-6 and C-8 positions of the octanoyl moiety bound to the lipoyl domains of lipoate-dependent enzymes, thereby converting the octanoylated domains into lipoylated derivatives.</text>
</comment>
<comment type="catalytic activity">
    <reaction evidence="1">
        <text>[[Fe-S] cluster scaffold protein carrying a second [4Fe-4S](2+) cluster] + N(6)-octanoyl-L-lysyl-[protein] + 2 oxidized [2Fe-2S]-[ferredoxin] + 2 S-adenosyl-L-methionine + 4 H(+) = [[Fe-S] cluster scaffold protein] + N(6)-[(R)-dihydrolipoyl]-L-lysyl-[protein] + 4 Fe(3+) + 2 hydrogen sulfide + 2 5'-deoxyadenosine + 2 L-methionine + 2 reduced [2Fe-2S]-[ferredoxin]</text>
        <dbReference type="Rhea" id="RHEA:16585"/>
        <dbReference type="Rhea" id="RHEA-COMP:9928"/>
        <dbReference type="Rhea" id="RHEA-COMP:10000"/>
        <dbReference type="Rhea" id="RHEA-COMP:10001"/>
        <dbReference type="Rhea" id="RHEA-COMP:10475"/>
        <dbReference type="Rhea" id="RHEA-COMP:14568"/>
        <dbReference type="Rhea" id="RHEA-COMP:14569"/>
        <dbReference type="ChEBI" id="CHEBI:15378"/>
        <dbReference type="ChEBI" id="CHEBI:17319"/>
        <dbReference type="ChEBI" id="CHEBI:29034"/>
        <dbReference type="ChEBI" id="CHEBI:29919"/>
        <dbReference type="ChEBI" id="CHEBI:33722"/>
        <dbReference type="ChEBI" id="CHEBI:33737"/>
        <dbReference type="ChEBI" id="CHEBI:33738"/>
        <dbReference type="ChEBI" id="CHEBI:57844"/>
        <dbReference type="ChEBI" id="CHEBI:59789"/>
        <dbReference type="ChEBI" id="CHEBI:78809"/>
        <dbReference type="ChEBI" id="CHEBI:83100"/>
        <dbReference type="EC" id="2.8.1.8"/>
    </reaction>
</comment>
<comment type="cofactor">
    <cofactor evidence="1">
        <name>[4Fe-4S] cluster</name>
        <dbReference type="ChEBI" id="CHEBI:49883"/>
    </cofactor>
    <text evidence="1">Binds 2 [4Fe-4S] clusters per subunit. One cluster is coordinated with 3 cysteines and an exchangeable S-adenosyl-L-methionine.</text>
</comment>
<comment type="pathway">
    <text evidence="1">Protein modification; protein lipoylation via endogenous pathway; protein N(6)-(lipoyl)lysine from octanoyl-[acyl-carrier-protein]: step 2/2.</text>
</comment>
<comment type="subcellular location">
    <subcellularLocation>
        <location evidence="1">Cytoplasm</location>
    </subcellularLocation>
</comment>
<comment type="similarity">
    <text evidence="1">Belongs to the radical SAM superfamily. Lipoyl synthase family.</text>
</comment>
<comment type="sequence caution" evidence="3">
    <conflict type="erroneous initiation">
        <sequence resource="EMBL-CDS" id="ABV78469"/>
    </conflict>
</comment>
<protein>
    <recommendedName>
        <fullName evidence="1">Lipoyl synthase</fullName>
        <ecNumber evidence="1">2.8.1.8</ecNumber>
    </recommendedName>
    <alternativeName>
        <fullName evidence="1">Lip-syn</fullName>
        <shortName evidence="1">LS</shortName>
    </alternativeName>
    <alternativeName>
        <fullName evidence="1">Lipoate synthase</fullName>
    </alternativeName>
    <alternativeName>
        <fullName evidence="1">Lipoic acid synthase</fullName>
    </alternativeName>
    <alternativeName>
        <fullName evidence="1">Sulfur insertion protein LipA</fullName>
    </alternativeName>
</protein>
<name>LIPA_RICB8</name>
<feature type="chain" id="PRO_0000325304" description="Lipoyl synthase">
    <location>
        <begin position="1"/>
        <end position="303"/>
    </location>
</feature>
<feature type="domain" description="Radical SAM core" evidence="2">
    <location>
        <begin position="46"/>
        <end position="262"/>
    </location>
</feature>
<feature type="binding site" evidence="1">
    <location>
        <position position="34"/>
    </location>
    <ligand>
        <name>[4Fe-4S] cluster</name>
        <dbReference type="ChEBI" id="CHEBI:49883"/>
        <label>1</label>
    </ligand>
</feature>
<feature type="binding site" evidence="1">
    <location>
        <position position="39"/>
    </location>
    <ligand>
        <name>[4Fe-4S] cluster</name>
        <dbReference type="ChEBI" id="CHEBI:49883"/>
        <label>1</label>
    </ligand>
</feature>
<feature type="binding site" evidence="1">
    <location>
        <position position="45"/>
    </location>
    <ligand>
        <name>[4Fe-4S] cluster</name>
        <dbReference type="ChEBI" id="CHEBI:49883"/>
        <label>1</label>
    </ligand>
</feature>
<feature type="binding site" evidence="1">
    <location>
        <position position="60"/>
    </location>
    <ligand>
        <name>[4Fe-4S] cluster</name>
        <dbReference type="ChEBI" id="CHEBI:49883"/>
        <label>2</label>
        <note>4Fe-4S-S-AdoMet</note>
    </ligand>
</feature>
<feature type="binding site" evidence="1">
    <location>
        <position position="64"/>
    </location>
    <ligand>
        <name>[4Fe-4S] cluster</name>
        <dbReference type="ChEBI" id="CHEBI:49883"/>
        <label>2</label>
        <note>4Fe-4S-S-AdoMet</note>
    </ligand>
</feature>
<feature type="binding site" evidence="1">
    <location>
        <position position="67"/>
    </location>
    <ligand>
        <name>[4Fe-4S] cluster</name>
        <dbReference type="ChEBI" id="CHEBI:49883"/>
        <label>2</label>
        <note>4Fe-4S-S-AdoMet</note>
    </ligand>
</feature>
<feature type="binding site" evidence="1">
    <location>
        <position position="273"/>
    </location>
    <ligand>
        <name>[4Fe-4S] cluster</name>
        <dbReference type="ChEBI" id="CHEBI:49883"/>
        <label>1</label>
    </ligand>
</feature>
<accession>A8GUH3</accession>
<organism>
    <name type="scientific">Rickettsia bellii (strain OSU 85-389)</name>
    <dbReference type="NCBI Taxonomy" id="391896"/>
    <lineage>
        <taxon>Bacteria</taxon>
        <taxon>Pseudomonadati</taxon>
        <taxon>Pseudomonadota</taxon>
        <taxon>Alphaproteobacteria</taxon>
        <taxon>Rickettsiales</taxon>
        <taxon>Rickettsiaceae</taxon>
        <taxon>Rickettsieae</taxon>
        <taxon>Rickettsia</taxon>
        <taxon>belli group</taxon>
    </lineage>
</organism>
<dbReference type="EC" id="2.8.1.8" evidence="1"/>
<dbReference type="EMBL" id="CP000849">
    <property type="protein sequence ID" value="ABV78469.1"/>
    <property type="status" value="ALT_INIT"/>
    <property type="molecule type" value="Genomic_DNA"/>
</dbReference>
<dbReference type="SMR" id="A8GUH3"/>
<dbReference type="KEGG" id="rbo:A1I_00315"/>
<dbReference type="HOGENOM" id="CLU_033144_2_1_5"/>
<dbReference type="UniPathway" id="UPA00538">
    <property type="reaction ID" value="UER00593"/>
</dbReference>
<dbReference type="GO" id="GO:0005737">
    <property type="term" value="C:cytoplasm"/>
    <property type="evidence" value="ECO:0007669"/>
    <property type="project" value="UniProtKB-SubCell"/>
</dbReference>
<dbReference type="GO" id="GO:0051539">
    <property type="term" value="F:4 iron, 4 sulfur cluster binding"/>
    <property type="evidence" value="ECO:0007669"/>
    <property type="project" value="UniProtKB-UniRule"/>
</dbReference>
<dbReference type="GO" id="GO:0016992">
    <property type="term" value="F:lipoate synthase activity"/>
    <property type="evidence" value="ECO:0007669"/>
    <property type="project" value="UniProtKB-UniRule"/>
</dbReference>
<dbReference type="GO" id="GO:0046872">
    <property type="term" value="F:metal ion binding"/>
    <property type="evidence" value="ECO:0007669"/>
    <property type="project" value="UniProtKB-KW"/>
</dbReference>
<dbReference type="CDD" id="cd01335">
    <property type="entry name" value="Radical_SAM"/>
    <property type="match status" value="1"/>
</dbReference>
<dbReference type="FunFam" id="3.20.20.70:FF:000040">
    <property type="entry name" value="Lipoyl synthase"/>
    <property type="match status" value="1"/>
</dbReference>
<dbReference type="Gene3D" id="3.20.20.70">
    <property type="entry name" value="Aldolase class I"/>
    <property type="match status" value="1"/>
</dbReference>
<dbReference type="HAMAP" id="MF_00206">
    <property type="entry name" value="Lipoyl_synth"/>
    <property type="match status" value="1"/>
</dbReference>
<dbReference type="InterPro" id="IPR013785">
    <property type="entry name" value="Aldolase_TIM"/>
</dbReference>
<dbReference type="InterPro" id="IPR006638">
    <property type="entry name" value="Elp3/MiaA/NifB-like_rSAM"/>
</dbReference>
<dbReference type="InterPro" id="IPR031691">
    <property type="entry name" value="LIAS_N"/>
</dbReference>
<dbReference type="InterPro" id="IPR003698">
    <property type="entry name" value="Lipoyl_synth"/>
</dbReference>
<dbReference type="InterPro" id="IPR007197">
    <property type="entry name" value="rSAM"/>
</dbReference>
<dbReference type="NCBIfam" id="TIGR00510">
    <property type="entry name" value="lipA"/>
    <property type="match status" value="1"/>
</dbReference>
<dbReference type="NCBIfam" id="NF004019">
    <property type="entry name" value="PRK05481.1"/>
    <property type="match status" value="1"/>
</dbReference>
<dbReference type="NCBIfam" id="NF009544">
    <property type="entry name" value="PRK12928.1"/>
    <property type="match status" value="1"/>
</dbReference>
<dbReference type="PANTHER" id="PTHR10949">
    <property type="entry name" value="LIPOYL SYNTHASE"/>
    <property type="match status" value="1"/>
</dbReference>
<dbReference type="PANTHER" id="PTHR10949:SF0">
    <property type="entry name" value="LIPOYL SYNTHASE, MITOCHONDRIAL"/>
    <property type="match status" value="1"/>
</dbReference>
<dbReference type="Pfam" id="PF16881">
    <property type="entry name" value="LIAS_N"/>
    <property type="match status" value="1"/>
</dbReference>
<dbReference type="Pfam" id="PF04055">
    <property type="entry name" value="Radical_SAM"/>
    <property type="match status" value="1"/>
</dbReference>
<dbReference type="PIRSF" id="PIRSF005963">
    <property type="entry name" value="Lipoyl_synth"/>
    <property type="match status" value="1"/>
</dbReference>
<dbReference type="SFLD" id="SFLDF00271">
    <property type="entry name" value="lipoyl_synthase"/>
    <property type="match status" value="1"/>
</dbReference>
<dbReference type="SFLD" id="SFLDS00029">
    <property type="entry name" value="Radical_SAM"/>
    <property type="match status" value="1"/>
</dbReference>
<dbReference type="SMART" id="SM00729">
    <property type="entry name" value="Elp3"/>
    <property type="match status" value="1"/>
</dbReference>
<dbReference type="SUPFAM" id="SSF102114">
    <property type="entry name" value="Radical SAM enzymes"/>
    <property type="match status" value="1"/>
</dbReference>
<dbReference type="PROSITE" id="PS51918">
    <property type="entry name" value="RADICAL_SAM"/>
    <property type="match status" value="1"/>
</dbReference>
<keyword id="KW-0004">4Fe-4S</keyword>
<keyword id="KW-0963">Cytoplasm</keyword>
<keyword id="KW-0408">Iron</keyword>
<keyword id="KW-0411">Iron-sulfur</keyword>
<keyword id="KW-0479">Metal-binding</keyword>
<keyword id="KW-0949">S-adenosyl-L-methionine</keyword>
<keyword id="KW-0808">Transferase</keyword>
<sequence>MSKRPDWIKVKAPNSSEYYNTKDLIKNLKLNTVCEEAACPNIGECWSKKHATVMILGSVCTRACRFCNVKTGRPDLLDPHEPQRLAEAVQKLGLKHVVITSVDRDDLEDGGATHFAECISEIRKSSPNTTIEILTPDFLRKDGAAEIIANAKPDVFNHNVETVPSLYNTIRPGARYYNSLSLLHNIKKLSPEVFTKSGMMVGLGEEISEVVQVMDDLREAKVDFLTIGQYLQPTKNHAEVAKYVTPEEFKYLERVARTKGFLMVSASPLTRSSYHADEDFEKLKENYRHRHCEERRSIDVAIS</sequence>
<evidence type="ECO:0000255" key="1">
    <source>
        <dbReference type="HAMAP-Rule" id="MF_00206"/>
    </source>
</evidence>
<evidence type="ECO:0000255" key="2">
    <source>
        <dbReference type="PROSITE-ProRule" id="PRU01266"/>
    </source>
</evidence>
<evidence type="ECO:0000305" key="3"/>
<proteinExistence type="inferred from homology"/>